<protein>
    <recommendedName>
        <fullName>Probable cellulose synthase A catalytic subunit 1 [UDP-forming]</fullName>
        <ecNumber evidence="6">2.4.1.12</ecNumber>
    </recommendedName>
    <alternativeName>
        <fullName>OsCesA1</fullName>
    </alternativeName>
</protein>
<proteinExistence type="inferred from homology"/>
<organism>
    <name type="scientific">Oryza sativa subsp. indica</name>
    <name type="common">Rice</name>
    <dbReference type="NCBI Taxonomy" id="39946"/>
    <lineage>
        <taxon>Eukaryota</taxon>
        <taxon>Viridiplantae</taxon>
        <taxon>Streptophyta</taxon>
        <taxon>Embryophyta</taxon>
        <taxon>Tracheophyta</taxon>
        <taxon>Spermatophyta</taxon>
        <taxon>Magnoliopsida</taxon>
        <taxon>Liliopsida</taxon>
        <taxon>Poales</taxon>
        <taxon>Poaceae</taxon>
        <taxon>BOP clade</taxon>
        <taxon>Oryzoideae</taxon>
        <taxon>Oryzeae</taxon>
        <taxon>Oryzinae</taxon>
        <taxon>Oryza</taxon>
        <taxon>Oryza sativa</taxon>
    </lineage>
</organism>
<keyword id="KW-1003">Cell membrane</keyword>
<keyword id="KW-0961">Cell wall biogenesis/degradation</keyword>
<keyword id="KW-0135">Cellulose biosynthesis</keyword>
<keyword id="KW-0175">Coiled coil</keyword>
<keyword id="KW-0325">Glycoprotein</keyword>
<keyword id="KW-0328">Glycosyltransferase</keyword>
<keyword id="KW-0464">Manganese</keyword>
<keyword id="KW-0472">Membrane</keyword>
<keyword id="KW-0479">Metal-binding</keyword>
<keyword id="KW-1185">Reference proteome</keyword>
<keyword id="KW-0808">Transferase</keyword>
<keyword id="KW-0812">Transmembrane</keyword>
<keyword id="KW-1133">Transmembrane helix</keyword>
<keyword id="KW-0862">Zinc</keyword>
<keyword id="KW-0863">Zinc-finger</keyword>
<comment type="function">
    <text evidence="2">Catalytic subunit of cellulose synthase terminal complexes ('rosettes'), required for beta-1,4-glucan microfibril crystallization, a major mechanism of the cell wall formation.</text>
</comment>
<comment type="catalytic activity">
    <reaction evidence="6">
        <text>[(1-&gt;4)-beta-D-glucosyl](n) + UDP-alpha-D-glucose = [(1-&gt;4)-beta-D-glucosyl](n+1) + UDP + H(+)</text>
        <dbReference type="Rhea" id="RHEA:19929"/>
        <dbReference type="Rhea" id="RHEA-COMP:10033"/>
        <dbReference type="Rhea" id="RHEA-COMP:10034"/>
        <dbReference type="ChEBI" id="CHEBI:15378"/>
        <dbReference type="ChEBI" id="CHEBI:18246"/>
        <dbReference type="ChEBI" id="CHEBI:58223"/>
        <dbReference type="ChEBI" id="CHEBI:58885"/>
        <dbReference type="EC" id="2.4.1.12"/>
    </reaction>
</comment>
<comment type="cofactor">
    <cofactor evidence="2">
        <name>Zn(2+)</name>
        <dbReference type="ChEBI" id="CHEBI:29105"/>
    </cofactor>
    <text evidence="2">Binds 2 Zn(2+) ions per subunit.</text>
</comment>
<comment type="cofactor">
    <cofactor evidence="1">
        <name>Mn(2+)</name>
        <dbReference type="ChEBI" id="CHEBI:29035"/>
    </cofactor>
</comment>
<comment type="pathway">
    <text>Glycan metabolism; plant cellulose biosynthesis.</text>
</comment>
<comment type="subcellular location">
    <subcellularLocation>
        <location evidence="6">Cell membrane</location>
        <topology evidence="6">Multi-pass membrane protein</topology>
    </subcellularLocation>
</comment>
<comment type="similarity">
    <text evidence="6">Belongs to the glycosyltransferase 2 family. Plant cellulose synthase subfamily.</text>
</comment>
<accession>A2Y0X2</accession>
<evidence type="ECO:0000250" key="1">
    <source>
        <dbReference type="UniProtKB" id="Q941L0"/>
    </source>
</evidence>
<evidence type="ECO:0000250" key="2">
    <source>
        <dbReference type="UniProtKB" id="Q9SWW6"/>
    </source>
</evidence>
<evidence type="ECO:0000255" key="3"/>
<evidence type="ECO:0000255" key="4">
    <source>
        <dbReference type="PROSITE-ProRule" id="PRU00498"/>
    </source>
</evidence>
<evidence type="ECO:0000256" key="5">
    <source>
        <dbReference type="SAM" id="MobiDB-lite"/>
    </source>
</evidence>
<evidence type="ECO:0000305" key="6"/>
<dbReference type="EC" id="2.4.1.12" evidence="6"/>
<dbReference type="EMBL" id="CM000130">
    <property type="protein sequence ID" value="EAY96732.1"/>
    <property type="molecule type" value="Genomic_DNA"/>
</dbReference>
<dbReference type="SMR" id="A2Y0X2"/>
<dbReference type="STRING" id="39946.A2Y0X2"/>
<dbReference type="GlyCosmos" id="A2Y0X2">
    <property type="glycosylation" value="1 site, No reported glycans"/>
</dbReference>
<dbReference type="iPTMnet" id="A2Y0X2"/>
<dbReference type="EnsemblPlants" id="BGIOSGA018714-TA">
    <property type="protein sequence ID" value="BGIOSGA018714-PA"/>
    <property type="gene ID" value="BGIOSGA018714"/>
</dbReference>
<dbReference type="EnsemblPlants" id="OsGoSa_05g0005190.01">
    <property type="protein sequence ID" value="OsGoSa_05g0005190.01"/>
    <property type="gene ID" value="OsGoSa_05g0005190"/>
</dbReference>
<dbReference type="EnsemblPlants" id="OsIR64_05g0005030.01">
    <property type="protein sequence ID" value="OsIR64_05g0005030.01"/>
    <property type="gene ID" value="OsIR64_05g0005030"/>
</dbReference>
<dbReference type="EnsemblPlants" id="OsKYG_05g0005110.01">
    <property type="protein sequence ID" value="OsKYG_05g0005110.01"/>
    <property type="gene ID" value="OsKYG_05g0005110"/>
</dbReference>
<dbReference type="EnsemblPlants" id="OsLaMu_05g0005220.01">
    <property type="protein sequence ID" value="OsLaMu_05g0005220.01"/>
    <property type="gene ID" value="OsLaMu_05g0005220"/>
</dbReference>
<dbReference type="EnsemblPlants" id="OsLaMu_05g0005220.03">
    <property type="protein sequence ID" value="OsLaMu_05g0005220.03"/>
    <property type="gene ID" value="OsLaMu_05g0005220"/>
</dbReference>
<dbReference type="EnsemblPlants" id="OsLaMu_05g0005220.04">
    <property type="protein sequence ID" value="OsLaMu_05g0005220.04"/>
    <property type="gene ID" value="OsLaMu_05g0005220"/>
</dbReference>
<dbReference type="EnsemblPlants" id="OsLiXu_05g0005210.01">
    <property type="protein sequence ID" value="OsLiXu_05g0005210.01"/>
    <property type="gene ID" value="OsLiXu_05g0005210"/>
</dbReference>
<dbReference type="EnsemblPlants" id="OsMH63_05G005230_01">
    <property type="protein sequence ID" value="OsMH63_05G005230_01"/>
    <property type="gene ID" value="OsMH63_05G005230"/>
</dbReference>
<dbReference type="EnsemblPlants" id="OsPr106_05g0005270.01">
    <property type="protein sequence ID" value="OsPr106_05g0005270.01"/>
    <property type="gene ID" value="OsPr106_05g0005270"/>
</dbReference>
<dbReference type="EnsemblPlants" id="OsZS97_05G005210_01">
    <property type="protein sequence ID" value="OsZS97_05G005210_01"/>
    <property type="gene ID" value="OsZS97_05G005210"/>
</dbReference>
<dbReference type="Gramene" id="BGIOSGA018714-TA">
    <property type="protein sequence ID" value="BGIOSGA018714-PA"/>
    <property type="gene ID" value="BGIOSGA018714"/>
</dbReference>
<dbReference type="Gramene" id="OsGoSa_05g0005190.01">
    <property type="protein sequence ID" value="OsGoSa_05g0005190.01"/>
    <property type="gene ID" value="OsGoSa_05g0005190"/>
</dbReference>
<dbReference type="Gramene" id="OsIR64_05g0005030.01">
    <property type="protein sequence ID" value="OsIR64_05g0005030.01"/>
    <property type="gene ID" value="OsIR64_05g0005030"/>
</dbReference>
<dbReference type="Gramene" id="OsKYG_05g0005110.01">
    <property type="protein sequence ID" value="OsKYG_05g0005110.01"/>
    <property type="gene ID" value="OsKYG_05g0005110"/>
</dbReference>
<dbReference type="Gramene" id="OsLaMu_05g0005220.01">
    <property type="protein sequence ID" value="OsLaMu_05g0005220.01"/>
    <property type="gene ID" value="OsLaMu_05g0005220"/>
</dbReference>
<dbReference type="Gramene" id="OsLaMu_05g0005220.03">
    <property type="protein sequence ID" value="OsLaMu_05g0005220.03"/>
    <property type="gene ID" value="OsLaMu_05g0005220"/>
</dbReference>
<dbReference type="Gramene" id="OsLaMu_05g0005220.04">
    <property type="protein sequence ID" value="OsLaMu_05g0005220.04"/>
    <property type="gene ID" value="OsLaMu_05g0005220"/>
</dbReference>
<dbReference type="Gramene" id="OsLiXu_05g0005210.01">
    <property type="protein sequence ID" value="OsLiXu_05g0005210.01"/>
    <property type="gene ID" value="OsLiXu_05g0005210"/>
</dbReference>
<dbReference type="Gramene" id="OsMH63_05G005230_01">
    <property type="protein sequence ID" value="OsMH63_05G005230_01"/>
    <property type="gene ID" value="OsMH63_05G005230"/>
</dbReference>
<dbReference type="Gramene" id="OsPr106_05g0005270.01">
    <property type="protein sequence ID" value="OsPr106_05g0005270.01"/>
    <property type="gene ID" value="OsPr106_05g0005270"/>
</dbReference>
<dbReference type="Gramene" id="OsZS97_05G005210_01">
    <property type="protein sequence ID" value="OsZS97_05G005210_01"/>
    <property type="gene ID" value="OsZS97_05G005210"/>
</dbReference>
<dbReference type="HOGENOM" id="CLU_001418_0_2_1"/>
<dbReference type="OMA" id="HESDGGT"/>
<dbReference type="OrthoDB" id="596177at2759"/>
<dbReference type="UniPathway" id="UPA00695"/>
<dbReference type="Proteomes" id="UP000007015">
    <property type="component" value="Chromosome 5"/>
</dbReference>
<dbReference type="GO" id="GO:0005886">
    <property type="term" value="C:plasma membrane"/>
    <property type="evidence" value="ECO:0007669"/>
    <property type="project" value="UniProtKB-SubCell"/>
</dbReference>
<dbReference type="GO" id="GO:0016760">
    <property type="term" value="F:cellulose synthase (UDP-forming) activity"/>
    <property type="evidence" value="ECO:0007669"/>
    <property type="project" value="UniProtKB-EC"/>
</dbReference>
<dbReference type="GO" id="GO:0008270">
    <property type="term" value="F:zinc ion binding"/>
    <property type="evidence" value="ECO:0007669"/>
    <property type="project" value="UniProtKB-KW"/>
</dbReference>
<dbReference type="GO" id="GO:0071555">
    <property type="term" value="P:cell wall organization"/>
    <property type="evidence" value="ECO:0007669"/>
    <property type="project" value="UniProtKB-KW"/>
</dbReference>
<dbReference type="GO" id="GO:0030244">
    <property type="term" value="P:cellulose biosynthetic process"/>
    <property type="evidence" value="ECO:0007669"/>
    <property type="project" value="UniProtKB-KW"/>
</dbReference>
<dbReference type="GO" id="GO:0071669">
    <property type="term" value="P:plant-type cell wall organization or biogenesis"/>
    <property type="evidence" value="ECO:0007669"/>
    <property type="project" value="UniProtKB-ARBA"/>
</dbReference>
<dbReference type="CDD" id="cd16617">
    <property type="entry name" value="mRING-HC-C4C4_CesA"/>
    <property type="match status" value="1"/>
</dbReference>
<dbReference type="FunFam" id="3.30.40.10:FF:000031">
    <property type="entry name" value="Cellulose synthase"/>
    <property type="match status" value="1"/>
</dbReference>
<dbReference type="FunFam" id="3.90.550.10:FF:000009">
    <property type="entry name" value="Cellulose synthase"/>
    <property type="match status" value="1"/>
</dbReference>
<dbReference type="Gene3D" id="3.90.550.10">
    <property type="entry name" value="Spore Coat Polysaccharide Biosynthesis Protein SpsA, Chain A"/>
    <property type="match status" value="1"/>
</dbReference>
<dbReference type="Gene3D" id="3.30.40.10">
    <property type="entry name" value="Zinc/RING finger domain, C3HC4 (zinc finger)"/>
    <property type="match status" value="1"/>
</dbReference>
<dbReference type="InterPro" id="IPR005150">
    <property type="entry name" value="Cellulose_synth"/>
</dbReference>
<dbReference type="InterPro" id="IPR027934">
    <property type="entry name" value="CES_Znf_RING"/>
</dbReference>
<dbReference type="InterPro" id="IPR029044">
    <property type="entry name" value="Nucleotide-diphossugar_trans"/>
</dbReference>
<dbReference type="InterPro" id="IPR013083">
    <property type="entry name" value="Znf_RING/FYVE/PHD"/>
</dbReference>
<dbReference type="PANTHER" id="PTHR13301">
    <property type="entry name" value="X-BOX TRANSCRIPTION FACTOR-RELATED"/>
    <property type="match status" value="1"/>
</dbReference>
<dbReference type="Pfam" id="PF03552">
    <property type="entry name" value="Cellulose_synt"/>
    <property type="match status" value="1"/>
</dbReference>
<dbReference type="Pfam" id="PF14569">
    <property type="entry name" value="zf-UDP"/>
    <property type="match status" value="1"/>
</dbReference>
<dbReference type="SUPFAM" id="SSF53448">
    <property type="entry name" value="Nucleotide-diphospho-sugar transferases"/>
    <property type="match status" value="1"/>
</dbReference>
<dbReference type="SUPFAM" id="SSF57850">
    <property type="entry name" value="RING/U-box"/>
    <property type="match status" value="1"/>
</dbReference>
<reference key="1">
    <citation type="journal article" date="2005" name="PLoS Biol.">
        <title>The genomes of Oryza sativa: a history of duplications.</title>
        <authorList>
            <person name="Yu J."/>
            <person name="Wang J."/>
            <person name="Lin W."/>
            <person name="Li S."/>
            <person name="Li H."/>
            <person name="Zhou J."/>
            <person name="Ni P."/>
            <person name="Dong W."/>
            <person name="Hu S."/>
            <person name="Zeng C."/>
            <person name="Zhang J."/>
            <person name="Zhang Y."/>
            <person name="Li R."/>
            <person name="Xu Z."/>
            <person name="Li S."/>
            <person name="Li X."/>
            <person name="Zheng H."/>
            <person name="Cong L."/>
            <person name="Lin L."/>
            <person name="Yin J."/>
            <person name="Geng J."/>
            <person name="Li G."/>
            <person name="Shi J."/>
            <person name="Liu J."/>
            <person name="Lv H."/>
            <person name="Li J."/>
            <person name="Wang J."/>
            <person name="Deng Y."/>
            <person name="Ran L."/>
            <person name="Shi X."/>
            <person name="Wang X."/>
            <person name="Wu Q."/>
            <person name="Li C."/>
            <person name="Ren X."/>
            <person name="Wang J."/>
            <person name="Wang X."/>
            <person name="Li D."/>
            <person name="Liu D."/>
            <person name="Zhang X."/>
            <person name="Ji Z."/>
            <person name="Zhao W."/>
            <person name="Sun Y."/>
            <person name="Zhang Z."/>
            <person name="Bao J."/>
            <person name="Han Y."/>
            <person name="Dong L."/>
            <person name="Ji J."/>
            <person name="Chen P."/>
            <person name="Wu S."/>
            <person name="Liu J."/>
            <person name="Xiao Y."/>
            <person name="Bu D."/>
            <person name="Tan J."/>
            <person name="Yang L."/>
            <person name="Ye C."/>
            <person name="Zhang J."/>
            <person name="Xu J."/>
            <person name="Zhou Y."/>
            <person name="Yu Y."/>
            <person name="Zhang B."/>
            <person name="Zhuang S."/>
            <person name="Wei H."/>
            <person name="Liu B."/>
            <person name="Lei M."/>
            <person name="Yu H."/>
            <person name="Li Y."/>
            <person name="Xu H."/>
            <person name="Wei S."/>
            <person name="He X."/>
            <person name="Fang L."/>
            <person name="Zhang Z."/>
            <person name="Zhang Y."/>
            <person name="Huang X."/>
            <person name="Su Z."/>
            <person name="Tong W."/>
            <person name="Li J."/>
            <person name="Tong Z."/>
            <person name="Li S."/>
            <person name="Ye J."/>
            <person name="Wang L."/>
            <person name="Fang L."/>
            <person name="Lei T."/>
            <person name="Chen C.-S."/>
            <person name="Chen H.-C."/>
            <person name="Xu Z."/>
            <person name="Li H."/>
            <person name="Huang H."/>
            <person name="Zhang F."/>
            <person name="Xu H."/>
            <person name="Li N."/>
            <person name="Zhao C."/>
            <person name="Li S."/>
            <person name="Dong L."/>
            <person name="Huang Y."/>
            <person name="Li L."/>
            <person name="Xi Y."/>
            <person name="Qi Q."/>
            <person name="Li W."/>
            <person name="Zhang B."/>
            <person name="Hu W."/>
            <person name="Zhang Y."/>
            <person name="Tian X."/>
            <person name="Jiao Y."/>
            <person name="Liang X."/>
            <person name="Jin J."/>
            <person name="Gao L."/>
            <person name="Zheng W."/>
            <person name="Hao B."/>
            <person name="Liu S.-M."/>
            <person name="Wang W."/>
            <person name="Yuan L."/>
            <person name="Cao M."/>
            <person name="McDermott J."/>
            <person name="Samudrala R."/>
            <person name="Wang J."/>
            <person name="Wong G.K.-S."/>
            <person name="Yang H."/>
        </authorList>
    </citation>
    <scope>NUCLEOTIDE SEQUENCE [LARGE SCALE GENOMIC DNA]</scope>
    <source>
        <strain>cv. 93-11</strain>
    </source>
</reference>
<gene>
    <name type="primary">CESA1</name>
    <name type="ORF">OsI_017965</name>
</gene>
<sequence>MAANAGMVAGSRNRNEFVMIRPDGDAPPPAKPGKSVNGQVCQICGDTVGVSATGDVFVACNECAFPVCRPCYEYERKEGNQCCPQCKTRYKRHKGSPRVQGDEEEEDVDDLDNEFNYKHGNGKGPEWQIQRQGEDVDLSSSSRHEQHRIPRLTSGQQISGEIPDASPDRHSIRSGTSSYVDPSVPVPVRIVDPSKDLNSYGINSVDWQERVASWRNKQDKNMMQVANKYPEARGGDMEGTGSNGEDMQMVDDARLPLSRIVPIPSNQLNLYRIVIILRLIILMFFFQYRVTHPVRDAYGLWLVSVICEIWFALSWLLDQFPKWYPINRETYLDRLALRYDREGEPSQLAPIDVFVSTVDPLKEPPLITANTVLSILAVDYPVDKVSCYVSDDGSAMLTFEALSETAEFARKWVPFCKKHNIEPRAPEFYFAQKIDYLKDKIQPSFVKERRAMKREYEEFKVRINALVAKAQKVPEEGWTMADGTAWPGNNPRDHPGMIQVFLGHSGGLDTDGNELPRLVYVSREKRPGFQHHKKAGAMNALIRVSAVLTNGAYLLNVDCDHYFNSSKALREAMCFMMDPALGRKTCYVQFPQRFDGIDLHDRYANRNIVFFDINMKGLDGIQGPVYVGTGCCFNRQALYGYDPVLTEADLEPNIVVKSCCGGRKKKSKSYMDSKNRMMKRTESSAPIFNMEDIEEGIEGYEDERSVLMSQKRLEKRFGQSPIFIASTFMTQGGIPPSTNPASLLKEAIHVISCGYEDKTEWGKEIGWIYGSVTEDILTGFKMHARGWISIYCMPPRPCFKGSAPINLSDRLNQVLRWALGSVEILLSRHCPIWYGYNGRLKLLERLAYINTIVYPITSIPLIAYCVLPAICLLTNKFIIPEISNYAGMFFILLFASIFATGILELRWSGVGIEDWWRNEQFWVIGGTSAHLFAVFQGLLKVLAGIDTNFTVTSKASDEDGDFAELYVFKWTSLLIPPTTVLVINLVGMVAGISYAINSGYQSWGPLFGKLFFSIWVILHLYPFLKGLMGRQNRTPTIVIVWSILLASIFSLLWVKIDPFISPTQKAVALGQCGVNC</sequence>
<feature type="chain" id="PRO_0000319357" description="Probable cellulose synthase A catalytic subunit 1 [UDP-forming]">
    <location>
        <begin position="1"/>
        <end position="1076"/>
    </location>
</feature>
<feature type="topological domain" description="Cytoplasmic" evidence="3">
    <location>
        <begin position="1"/>
        <end position="267"/>
    </location>
</feature>
<feature type="transmembrane region" description="Helical" evidence="3">
    <location>
        <begin position="268"/>
        <end position="288"/>
    </location>
</feature>
<feature type="topological domain" description="Extracellular" evidence="3">
    <location>
        <begin position="289"/>
        <end position="296"/>
    </location>
</feature>
<feature type="transmembrane region" description="Helical" evidence="3">
    <location>
        <begin position="297"/>
        <end position="317"/>
    </location>
</feature>
<feature type="topological domain" description="Cytoplasmic" evidence="3">
    <location>
        <begin position="318"/>
        <end position="851"/>
    </location>
</feature>
<feature type="transmembrane region" description="Helical" evidence="3">
    <location>
        <begin position="852"/>
        <end position="872"/>
    </location>
</feature>
<feature type="topological domain" description="Extracellular" evidence="3">
    <location>
        <begin position="873"/>
        <end position="884"/>
    </location>
</feature>
<feature type="transmembrane region" description="Helical" evidence="3">
    <location>
        <begin position="885"/>
        <end position="905"/>
    </location>
</feature>
<feature type="topological domain" description="Cytoplasmic" evidence="3">
    <location>
        <begin position="906"/>
        <end position="920"/>
    </location>
</feature>
<feature type="transmembrane region" description="Helical" evidence="3">
    <location>
        <begin position="921"/>
        <end position="941"/>
    </location>
</feature>
<feature type="topological domain" description="Extracellular" evidence="3">
    <location>
        <begin position="942"/>
        <end position="971"/>
    </location>
</feature>
<feature type="transmembrane region" description="Helical" evidence="3">
    <location>
        <begin position="972"/>
        <end position="992"/>
    </location>
</feature>
<feature type="topological domain" description="Cytoplasmic" evidence="3">
    <location>
        <begin position="993"/>
        <end position="1003"/>
    </location>
</feature>
<feature type="transmembrane region" description="Helical" evidence="3">
    <location>
        <begin position="1004"/>
        <end position="1024"/>
    </location>
</feature>
<feature type="topological domain" description="Extracellular" evidence="3">
    <location>
        <begin position="1025"/>
        <end position="1033"/>
    </location>
</feature>
<feature type="transmembrane region" description="Helical" evidence="3">
    <location>
        <begin position="1034"/>
        <end position="1054"/>
    </location>
</feature>
<feature type="topological domain" description="Cytoplasmic" evidence="3">
    <location>
        <begin position="1055"/>
        <end position="1076"/>
    </location>
</feature>
<feature type="zinc finger region" description="RING-type; degenerate">
    <location>
        <begin position="41"/>
        <end position="87"/>
    </location>
</feature>
<feature type="region of interest" description="Disordered" evidence="5">
    <location>
        <begin position="119"/>
        <end position="179"/>
    </location>
</feature>
<feature type="coiled-coil region" evidence="3">
    <location>
        <begin position="446"/>
        <end position="473"/>
    </location>
</feature>
<feature type="active site" evidence="3">
    <location>
        <position position="392"/>
    </location>
</feature>
<feature type="active site" evidence="3">
    <location>
        <position position="775"/>
    </location>
</feature>
<feature type="binding site" evidence="2">
    <location>
        <position position="41"/>
    </location>
    <ligand>
        <name>Zn(2+)</name>
        <dbReference type="ChEBI" id="CHEBI:29105"/>
        <label>1</label>
    </ligand>
</feature>
<feature type="binding site" evidence="2">
    <location>
        <position position="44"/>
    </location>
    <ligand>
        <name>Zn(2+)</name>
        <dbReference type="ChEBI" id="CHEBI:29105"/>
        <label>1</label>
    </ligand>
</feature>
<feature type="binding site" evidence="2">
    <location>
        <position position="60"/>
    </location>
    <ligand>
        <name>Zn(2+)</name>
        <dbReference type="ChEBI" id="CHEBI:29105"/>
        <label>2</label>
    </ligand>
</feature>
<feature type="binding site" evidence="2">
    <location>
        <position position="63"/>
    </location>
    <ligand>
        <name>Zn(2+)</name>
        <dbReference type="ChEBI" id="CHEBI:29105"/>
        <label>2</label>
    </ligand>
</feature>
<feature type="binding site" evidence="2">
    <location>
        <position position="68"/>
    </location>
    <ligand>
        <name>Zn(2+)</name>
        <dbReference type="ChEBI" id="CHEBI:29105"/>
        <label>1</label>
    </ligand>
</feature>
<feature type="binding site" evidence="2">
    <location>
        <position position="71"/>
    </location>
    <ligand>
        <name>Zn(2+)</name>
        <dbReference type="ChEBI" id="CHEBI:29105"/>
        <label>1</label>
    </ligand>
</feature>
<feature type="binding site" evidence="2">
    <location>
        <position position="83"/>
    </location>
    <ligand>
        <name>Zn(2+)</name>
        <dbReference type="ChEBI" id="CHEBI:29105"/>
        <label>2</label>
    </ligand>
</feature>
<feature type="binding site" evidence="2">
    <location>
        <position position="86"/>
    </location>
    <ligand>
        <name>Zn(2+)</name>
        <dbReference type="ChEBI" id="CHEBI:29105"/>
        <label>2</label>
    </ligand>
</feature>
<feature type="binding site" evidence="1">
    <location>
        <position position="356"/>
    </location>
    <ligand>
        <name>UDP-alpha-D-glucose</name>
        <dbReference type="ChEBI" id="CHEBI:58885"/>
    </ligand>
</feature>
<feature type="binding site" evidence="1">
    <location>
        <position position="362"/>
    </location>
    <ligand>
        <name>UDP-alpha-D-glucose</name>
        <dbReference type="ChEBI" id="CHEBI:58885"/>
    </ligand>
</feature>
<feature type="binding site" evidence="1">
    <location>
        <position position="363"/>
    </location>
    <ligand>
        <name>UDP-alpha-D-glucose</name>
        <dbReference type="ChEBI" id="CHEBI:58885"/>
    </ligand>
</feature>
<feature type="binding site" evidence="1">
    <location>
        <position position="392"/>
    </location>
    <ligand>
        <name>UDP-alpha-D-glucose</name>
        <dbReference type="ChEBI" id="CHEBI:58885"/>
    </ligand>
</feature>
<feature type="binding site" evidence="1">
    <location>
        <position position="533"/>
    </location>
    <ligand>
        <name>UDP-alpha-D-glucose</name>
        <dbReference type="ChEBI" id="CHEBI:58885"/>
    </ligand>
</feature>
<feature type="binding site" evidence="1">
    <location>
        <position position="534"/>
    </location>
    <ligand>
        <name>Mn(2+)</name>
        <dbReference type="ChEBI" id="CHEBI:29035"/>
    </ligand>
</feature>
<feature type="binding site" evidence="1">
    <location>
        <position position="558"/>
    </location>
    <ligand>
        <name>Mn(2+)</name>
        <dbReference type="ChEBI" id="CHEBI:29035"/>
    </ligand>
</feature>
<feature type="glycosylation site" description="N-linked (GlcNAc...) asparagine" evidence="4">
    <location>
        <position position="948"/>
    </location>
</feature>
<name>CESA1_ORYSI</name>